<name>NGR1_YEAST</name>
<organism>
    <name type="scientific">Saccharomyces cerevisiae (strain ATCC 204508 / S288c)</name>
    <name type="common">Baker's yeast</name>
    <dbReference type="NCBI Taxonomy" id="559292"/>
    <lineage>
        <taxon>Eukaryota</taxon>
        <taxon>Fungi</taxon>
        <taxon>Dikarya</taxon>
        <taxon>Ascomycota</taxon>
        <taxon>Saccharomycotina</taxon>
        <taxon>Saccharomycetes</taxon>
        <taxon>Saccharomycetales</taxon>
        <taxon>Saccharomycetaceae</taxon>
        <taxon>Saccharomyces</taxon>
    </lineage>
</organism>
<accession>P32831</accession>
<accession>D6VQK8</accession>
<feature type="chain" id="PRO_0000081660" description="Negative growth regulatory protein NGR1">
    <location>
        <begin position="1"/>
        <end position="672"/>
    </location>
</feature>
<feature type="domain" description="RRM 1" evidence="1">
    <location>
        <begin position="36"/>
        <end position="159"/>
    </location>
</feature>
<feature type="domain" description="RRM 2" evidence="1">
    <location>
        <begin position="192"/>
        <end position="271"/>
    </location>
</feature>
<feature type="domain" description="RRM 3" evidence="1">
    <location>
        <begin position="360"/>
        <end position="432"/>
    </location>
</feature>
<feature type="region of interest" description="Disordered" evidence="2">
    <location>
        <begin position="1"/>
        <end position="40"/>
    </location>
</feature>
<feature type="region of interest" description="Disordered" evidence="2">
    <location>
        <begin position="77"/>
        <end position="102"/>
    </location>
</feature>
<feature type="region of interest" description="Disordered" evidence="2">
    <location>
        <begin position="640"/>
        <end position="672"/>
    </location>
</feature>
<feature type="compositionally biased region" description="Polar residues" evidence="2">
    <location>
        <begin position="1"/>
        <end position="13"/>
    </location>
</feature>
<feature type="compositionally biased region" description="Polar residues" evidence="2">
    <location>
        <begin position="23"/>
        <end position="32"/>
    </location>
</feature>
<feature type="compositionally biased region" description="Low complexity" evidence="2">
    <location>
        <begin position="77"/>
        <end position="96"/>
    </location>
</feature>
<feature type="compositionally biased region" description="Low complexity" evidence="2">
    <location>
        <begin position="645"/>
        <end position="656"/>
    </location>
</feature>
<feature type="modified residue" description="N-acetylmethionine" evidence="7">
    <location>
        <position position="1"/>
    </location>
</feature>
<feature type="modified residue" description="Phosphoserine" evidence="5 6">
    <location>
        <position position="524"/>
    </location>
</feature>
<feature type="splice variant" id="VSP_058122" description="In isoform 2." evidence="4">
    <location>
        <position position="1"/>
    </location>
</feature>
<feature type="sequence conflict" description="In Ref. 1; CAA78478." evidence="4" ref="1">
    <original>P</original>
    <variation>S</variation>
    <location>
        <position position="322"/>
    </location>
</feature>
<feature type="sequence conflict" description="In Ref. 1; CAA78478." evidence="4" ref="1">
    <original>T</original>
    <variation>N</variation>
    <location>
        <position position="568"/>
    </location>
</feature>
<feature type="sequence conflict" description="In Ref. 1; CAA78478." evidence="4" ref="1">
    <original>P</original>
    <variation>S</variation>
    <location>
        <position position="585"/>
    </location>
</feature>
<feature type="initiator methionine" description="Removed" evidence="7">
    <location sequence="P32831-2">
        <position position="1"/>
    </location>
</feature>
<feature type="modified residue" description="N-acetylserine" evidence="7">
    <location sequence="P32831-2">
        <position position="2"/>
    </location>
</feature>
<keyword id="KW-0007">Acetylation</keyword>
<keyword id="KW-0024">Alternative initiation</keyword>
<keyword id="KW-0597">Phosphoprotein</keyword>
<keyword id="KW-1185">Reference proteome</keyword>
<keyword id="KW-0677">Repeat</keyword>
<keyword id="KW-0694">RNA-binding</keyword>
<evidence type="ECO:0000255" key="1">
    <source>
        <dbReference type="PROSITE-ProRule" id="PRU00176"/>
    </source>
</evidence>
<evidence type="ECO:0000256" key="2">
    <source>
        <dbReference type="SAM" id="MobiDB-lite"/>
    </source>
</evidence>
<evidence type="ECO:0000269" key="3">
    <source>
    </source>
</evidence>
<evidence type="ECO:0000305" key="4"/>
<evidence type="ECO:0007744" key="5">
    <source>
    </source>
</evidence>
<evidence type="ECO:0007744" key="6">
    <source>
    </source>
</evidence>
<evidence type="ECO:0007744" key="7">
    <source>
    </source>
</evidence>
<reference key="1">
    <citation type="journal article" date="1993" name="J. Biol. Chem.">
        <title>An RNA-binding protein gene (RBP1) of Saccharomyces cerevisiae encodes a putative glucose-repressible protein containing two RNA recognition motifs.</title>
        <authorList>
            <person name="Lee F.-J.S."/>
            <person name="Moss J."/>
        </authorList>
    </citation>
    <scope>NUCLEOTIDE SEQUENCE [GENOMIC DNA]</scope>
</reference>
<reference key="2">
    <citation type="journal article" date="1994" name="EMBO J.">
        <title>Complete DNA sequence of yeast chromosome II.</title>
        <authorList>
            <person name="Feldmann H."/>
            <person name="Aigle M."/>
            <person name="Aljinovic G."/>
            <person name="Andre B."/>
            <person name="Baclet M.C."/>
            <person name="Barthe C."/>
            <person name="Baur A."/>
            <person name="Becam A.-M."/>
            <person name="Biteau N."/>
            <person name="Boles E."/>
            <person name="Brandt T."/>
            <person name="Brendel M."/>
            <person name="Brueckner M."/>
            <person name="Bussereau F."/>
            <person name="Christiansen C."/>
            <person name="Contreras R."/>
            <person name="Crouzet M."/>
            <person name="Cziepluch C."/>
            <person name="Demolis N."/>
            <person name="Delaveau T."/>
            <person name="Doignon F."/>
            <person name="Domdey H."/>
            <person name="Duesterhus S."/>
            <person name="Dubois E."/>
            <person name="Dujon B."/>
            <person name="El Bakkoury M."/>
            <person name="Entian K.-D."/>
            <person name="Feuermann M."/>
            <person name="Fiers W."/>
            <person name="Fobo G.M."/>
            <person name="Fritz C."/>
            <person name="Gassenhuber J."/>
            <person name="Glansdorff N."/>
            <person name="Goffeau A."/>
            <person name="Grivell L.A."/>
            <person name="de Haan M."/>
            <person name="Hein C."/>
            <person name="Herbert C.J."/>
            <person name="Hollenberg C.P."/>
            <person name="Holmstroem K."/>
            <person name="Jacq C."/>
            <person name="Jacquet M."/>
            <person name="Jauniaux J.-C."/>
            <person name="Jonniaux J.-L."/>
            <person name="Kallesoee T."/>
            <person name="Kiesau P."/>
            <person name="Kirchrath L."/>
            <person name="Koetter P."/>
            <person name="Korol S."/>
            <person name="Liebl S."/>
            <person name="Logghe M."/>
            <person name="Lohan A.J.E."/>
            <person name="Louis E.J."/>
            <person name="Li Z.Y."/>
            <person name="Maat M.J."/>
            <person name="Mallet L."/>
            <person name="Mannhaupt G."/>
            <person name="Messenguy F."/>
            <person name="Miosga T."/>
            <person name="Molemans F."/>
            <person name="Mueller S."/>
            <person name="Nasr F."/>
            <person name="Obermaier B."/>
            <person name="Perea J."/>
            <person name="Pierard A."/>
            <person name="Piravandi E."/>
            <person name="Pohl F.M."/>
            <person name="Pohl T.M."/>
            <person name="Potier S."/>
            <person name="Proft M."/>
            <person name="Purnelle B."/>
            <person name="Ramezani Rad M."/>
            <person name="Rieger M."/>
            <person name="Rose M."/>
            <person name="Schaaff-Gerstenschlaeger I."/>
            <person name="Scherens B."/>
            <person name="Schwarzlose C."/>
            <person name="Skala J."/>
            <person name="Slonimski P.P."/>
            <person name="Smits P.H.M."/>
            <person name="Souciet J.-L."/>
            <person name="Steensma H.Y."/>
            <person name="Stucka R."/>
            <person name="Urrestarazu L.A."/>
            <person name="van der Aart Q.J.M."/>
            <person name="Van Dyck L."/>
            <person name="Vassarotti A."/>
            <person name="Vetter I."/>
            <person name="Vierendeels F."/>
            <person name="Vissers S."/>
            <person name="Wagner G."/>
            <person name="de Wergifosse P."/>
            <person name="Wolfe K.H."/>
            <person name="Zagulski M."/>
            <person name="Zimmermann F.K."/>
            <person name="Mewes H.-W."/>
            <person name="Kleine K."/>
        </authorList>
    </citation>
    <scope>NUCLEOTIDE SEQUENCE [LARGE SCALE GENOMIC DNA]</scope>
    <source>
        <strain>ATCC 204508 / S288c</strain>
    </source>
</reference>
<reference key="3">
    <citation type="journal article" date="2014" name="G3 (Bethesda)">
        <title>The reference genome sequence of Saccharomyces cerevisiae: Then and now.</title>
        <authorList>
            <person name="Engel S.R."/>
            <person name="Dietrich F.S."/>
            <person name="Fisk D.G."/>
            <person name="Binkley G."/>
            <person name="Balakrishnan R."/>
            <person name="Costanzo M.C."/>
            <person name="Dwight S.S."/>
            <person name="Hitz B.C."/>
            <person name="Karra K."/>
            <person name="Nash R.S."/>
            <person name="Weng S."/>
            <person name="Wong E.D."/>
            <person name="Lloyd P."/>
            <person name="Skrzypek M.S."/>
            <person name="Miyasato S.R."/>
            <person name="Simison M."/>
            <person name="Cherry J.M."/>
        </authorList>
    </citation>
    <scope>GENOME REANNOTATION</scope>
    <source>
        <strain>ATCC 204508 / S288c</strain>
    </source>
</reference>
<reference key="4">
    <citation type="journal article" date="2003" name="Nature">
        <title>Global analysis of protein expression in yeast.</title>
        <authorList>
            <person name="Ghaemmaghami S."/>
            <person name="Huh W.-K."/>
            <person name="Bower K."/>
            <person name="Howson R.W."/>
            <person name="Belle A."/>
            <person name="Dephoure N."/>
            <person name="O'Shea E.K."/>
            <person name="Weissman J.S."/>
        </authorList>
    </citation>
    <scope>LEVEL OF PROTEIN EXPRESSION [LARGE SCALE ANALYSIS]</scope>
</reference>
<reference key="5">
    <citation type="journal article" date="2005" name="Mol. Cell. Proteomics">
        <title>Quantitative phosphoproteomics applied to the yeast pheromone signaling pathway.</title>
        <authorList>
            <person name="Gruhler A."/>
            <person name="Olsen J.V."/>
            <person name="Mohammed S."/>
            <person name="Mortensen P."/>
            <person name="Faergeman N.J."/>
            <person name="Mann M."/>
            <person name="Jensen O.N."/>
        </authorList>
    </citation>
    <scope>PHOSPHORYLATION [LARGE SCALE ANALYSIS] AT SER-524</scope>
    <scope>IDENTIFICATION BY MASS SPECTROMETRY [LARGE SCALE ANALYSIS]</scope>
    <source>
        <strain>YAL6B</strain>
    </source>
</reference>
<reference key="6">
    <citation type="journal article" date="2009" name="Science">
        <title>Global analysis of Cdk1 substrate phosphorylation sites provides insights into evolution.</title>
        <authorList>
            <person name="Holt L.J."/>
            <person name="Tuch B.B."/>
            <person name="Villen J."/>
            <person name="Johnson A.D."/>
            <person name="Gygi S.P."/>
            <person name="Morgan D.O."/>
        </authorList>
    </citation>
    <scope>PHOSPHORYLATION [LARGE SCALE ANALYSIS] AT SER-524</scope>
    <scope>IDENTIFICATION BY MASS SPECTROMETRY [LARGE SCALE ANALYSIS]</scope>
</reference>
<reference key="7">
    <citation type="journal article" date="2012" name="Proc. Natl. Acad. Sci. U.S.A.">
        <title>N-terminal acetylome analyses and functional insights of the N-terminal acetyltransferase NatB.</title>
        <authorList>
            <person name="Van Damme P."/>
            <person name="Lasa M."/>
            <person name="Polevoda B."/>
            <person name="Gazquez C."/>
            <person name="Elosegui-Artola A."/>
            <person name="Kim D.S."/>
            <person name="De Juan-Pardo E."/>
            <person name="Demeyer K."/>
            <person name="Hole K."/>
            <person name="Larrea E."/>
            <person name="Timmerman E."/>
            <person name="Prieto J."/>
            <person name="Arnesen T."/>
            <person name="Sherman F."/>
            <person name="Gevaert K."/>
            <person name="Aldabe R."/>
        </authorList>
    </citation>
    <scope>ACETYLATION [LARGE SCALE ANALYSIS] AT MET-1</scope>
    <scope>ACETYLATION [LARGE SCALE ANALYSIS] AT SER-2 (ISOFORM 2)</scope>
    <scope>CLEAVAGE OF INITIATOR METHIONINE [LARGE SCALE ANALYSIS] (ISOFORM 2)</scope>
    <scope>IDENTIFICATION BY MASS SPECTROMETRY [LARGE SCALE ANALYSIS]</scope>
</reference>
<comment type="function">
    <text>May be an RNA-binding protein involved in control of an RNA processing pathway that influences the regulation of cell growth in early log phase. Can bind to RNA and single-stranded DNA but not double-stranded DNA.</text>
</comment>
<comment type="alternative products">
    <event type="alternative initiation"/>
    <isoform>
        <id>P32831-1</id>
        <name>1</name>
        <sequence type="displayed"/>
    </isoform>
    <isoform>
        <id>P32831-2</id>
        <name>2</name>
        <sequence type="described" ref="VSP_058122"/>
    </isoform>
</comment>
<comment type="miscellaneous">
    <text evidence="3">Present with 1540 molecules/cell in log phase SD medium.</text>
</comment>
<gene>
    <name type="primary">NGR1</name>
    <name type="synonym">RBP1</name>
    <name type="ordered locus">YBR212W</name>
    <name type="ORF">YBR1459</name>
</gene>
<dbReference type="EMBL" id="Z14097">
    <property type="protein sequence ID" value="CAA78478.1"/>
    <property type="molecule type" value="Genomic_DNA"/>
</dbReference>
<dbReference type="EMBL" id="Z36081">
    <property type="protein sequence ID" value="CAA85176.1"/>
    <property type="molecule type" value="Genomic_DNA"/>
</dbReference>
<dbReference type="EMBL" id="BK006936">
    <property type="protein sequence ID" value="DAA07328.1"/>
    <property type="molecule type" value="Genomic_DNA"/>
</dbReference>
<dbReference type="PIR" id="S46086">
    <property type="entry name" value="S46086"/>
</dbReference>
<dbReference type="RefSeq" id="NP_009771.3">
    <molecule id="P32831-1"/>
    <property type="nucleotide sequence ID" value="NM_001178560.3"/>
</dbReference>
<dbReference type="BioGRID" id="32909">
    <property type="interactions" value="201"/>
</dbReference>
<dbReference type="DIP" id="DIP-5160N"/>
<dbReference type="FunCoup" id="P32831">
    <property type="interactions" value="130"/>
</dbReference>
<dbReference type="IntAct" id="P32831">
    <property type="interactions" value="4"/>
</dbReference>
<dbReference type="MINT" id="P32831"/>
<dbReference type="STRING" id="4932.YBR212W"/>
<dbReference type="GlyGen" id="P32831">
    <property type="glycosylation" value="1 site, 1 O-linked glycan (1 site)"/>
</dbReference>
<dbReference type="iPTMnet" id="P32831"/>
<dbReference type="PaxDb" id="4932-YBR212W"/>
<dbReference type="PeptideAtlas" id="P32831"/>
<dbReference type="EnsemblFungi" id="YBR212W_mRNA">
    <molecule id="P32831-1"/>
    <property type="protein sequence ID" value="YBR212W"/>
    <property type="gene ID" value="YBR212W"/>
</dbReference>
<dbReference type="GeneID" id="852513"/>
<dbReference type="KEGG" id="sce:YBR212W"/>
<dbReference type="AGR" id="SGD:S000000416"/>
<dbReference type="SGD" id="S000000416">
    <property type="gene designation" value="NGR1"/>
</dbReference>
<dbReference type="VEuPathDB" id="FungiDB:YBR212W"/>
<dbReference type="eggNOG" id="KOG0118">
    <property type="taxonomic scope" value="Eukaryota"/>
</dbReference>
<dbReference type="HOGENOM" id="CLU_016304_5_0_1"/>
<dbReference type="InParanoid" id="P32831"/>
<dbReference type="OMA" id="VEMNGAW"/>
<dbReference type="OrthoDB" id="446113at2759"/>
<dbReference type="BioCyc" id="YEAST:G3O-29149-MONOMER"/>
<dbReference type="BioGRID-ORCS" id="852513">
    <property type="hits" value="3 hits in 10 CRISPR screens"/>
</dbReference>
<dbReference type="CD-CODE" id="A777E0F8">
    <property type="entry name" value="P-body"/>
</dbReference>
<dbReference type="CD-CODE" id="E03F929F">
    <property type="entry name" value="Stress granule"/>
</dbReference>
<dbReference type="PRO" id="PR:P32831"/>
<dbReference type="Proteomes" id="UP000002311">
    <property type="component" value="Chromosome II"/>
</dbReference>
<dbReference type="RNAct" id="P32831">
    <property type="molecule type" value="protein"/>
</dbReference>
<dbReference type="GO" id="GO:0005737">
    <property type="term" value="C:cytoplasm"/>
    <property type="evidence" value="ECO:0007005"/>
    <property type="project" value="SGD"/>
</dbReference>
<dbReference type="GO" id="GO:0010494">
    <property type="term" value="C:cytoplasmic stress granule"/>
    <property type="evidence" value="ECO:0000314"/>
    <property type="project" value="SGD"/>
</dbReference>
<dbReference type="GO" id="GO:0005634">
    <property type="term" value="C:nucleus"/>
    <property type="evidence" value="ECO:0000318"/>
    <property type="project" value="GO_Central"/>
</dbReference>
<dbReference type="GO" id="GO:0000932">
    <property type="term" value="C:P-body"/>
    <property type="evidence" value="ECO:0000314"/>
    <property type="project" value="SGD"/>
</dbReference>
<dbReference type="GO" id="GO:0048471">
    <property type="term" value="C:perinuclear region of cytoplasm"/>
    <property type="evidence" value="ECO:0000314"/>
    <property type="project" value="SGD"/>
</dbReference>
<dbReference type="GO" id="GO:0003729">
    <property type="term" value="F:mRNA binding"/>
    <property type="evidence" value="ECO:0000314"/>
    <property type="project" value="SGD"/>
</dbReference>
<dbReference type="GO" id="GO:0061158">
    <property type="term" value="P:3'-UTR-mediated mRNA destabilization"/>
    <property type="evidence" value="ECO:0000314"/>
    <property type="project" value="SGD"/>
</dbReference>
<dbReference type="GO" id="GO:0007005">
    <property type="term" value="P:mitochondrion organization"/>
    <property type="evidence" value="ECO:0000315"/>
    <property type="project" value="SGD"/>
</dbReference>
<dbReference type="CDD" id="cd12611">
    <property type="entry name" value="RRM1_NGR1_NAM8_like"/>
    <property type="match status" value="1"/>
</dbReference>
<dbReference type="CDD" id="cd12613">
    <property type="entry name" value="RRM2_NGR1_NAM8_like"/>
    <property type="match status" value="1"/>
</dbReference>
<dbReference type="CDD" id="cd12346">
    <property type="entry name" value="RRM3_NGR1_NAM8_like"/>
    <property type="match status" value="1"/>
</dbReference>
<dbReference type="FunFam" id="3.30.70.330:FF:000875">
    <property type="entry name" value="Glucose-repressible RNA binding protein"/>
    <property type="match status" value="1"/>
</dbReference>
<dbReference type="FunFam" id="3.30.70.330:FF:000405">
    <property type="entry name" value="polyadenylate-binding protein RBP45"/>
    <property type="match status" value="1"/>
</dbReference>
<dbReference type="Gene3D" id="3.30.70.330">
    <property type="match status" value="3"/>
</dbReference>
<dbReference type="InterPro" id="IPR012677">
    <property type="entry name" value="Nucleotide-bd_a/b_plait_sf"/>
</dbReference>
<dbReference type="InterPro" id="IPR035979">
    <property type="entry name" value="RBD_domain_sf"/>
</dbReference>
<dbReference type="InterPro" id="IPR050825">
    <property type="entry name" value="RBM42_RBP45_47-like"/>
</dbReference>
<dbReference type="InterPro" id="IPR000504">
    <property type="entry name" value="RRM_dom"/>
</dbReference>
<dbReference type="PANTHER" id="PTHR47640:SF16">
    <property type="entry name" value="POLYADENYLATE-BINDING PROTEIN RBP47C-RELATED"/>
    <property type="match status" value="1"/>
</dbReference>
<dbReference type="PANTHER" id="PTHR47640">
    <property type="entry name" value="TRNA SELENOCYSTEINE 1-ASSOCIATED PROTEIN 1-RELATED-RELATED"/>
    <property type="match status" value="1"/>
</dbReference>
<dbReference type="Pfam" id="PF00076">
    <property type="entry name" value="RRM_1"/>
    <property type="match status" value="2"/>
</dbReference>
<dbReference type="SMART" id="SM00360">
    <property type="entry name" value="RRM"/>
    <property type="match status" value="3"/>
</dbReference>
<dbReference type="SUPFAM" id="SSF54928">
    <property type="entry name" value="RNA-binding domain, RBD"/>
    <property type="match status" value="3"/>
</dbReference>
<dbReference type="PROSITE" id="PS50102">
    <property type="entry name" value="RRM"/>
    <property type="match status" value="2"/>
</dbReference>
<protein>
    <recommendedName>
        <fullName>Negative growth regulatory protein NGR1</fullName>
    </recommendedName>
    <alternativeName>
        <fullName>RNA-binding protein RBP1</fullName>
    </alternativeName>
</protein>
<sequence length="672" mass="75024">MMSNVANASQRQENPYIIPLPPSSTVETSTEPPRTLWMGDLDPSFDEATIEEIWSKLDKKVIVKLIRAKKNLLIPCSSTSSSNNNTSEENAENQQSASNSTDQLDNSQMININGISFIDPSTTQLHHAGYCFVEFETQKDAKFALSLNATPLPNFYSPTTNSQTNPTFKRTFRLNWASGATLQSSIPSTPEFSLFVGDLSPTATEADLLSLFQTRFKSVKTVRVMTDPLTGSSRCFGFVRFGDEDERRRALIEMSGKWFQGRALRVAYATPRNNMMLQLQEQQQQQQQLQQQHQQLDQEDNNGPLLIKTANNLIQNNSNMLPLNALHNAPPMHLNEGGISNMRVNDSLPSNTYNTDPTNTTVFVGGLVPKTTEFQLRSLFKPFGPILNVRIPNGKNCGFVKFEKRIDAEASIQGLQGFIVGGSPIRLSWGRPSSSNAKTNSTIMGASQYMSSNGLRAPSAASSVDNSKQILEQYAEDKRRLFLHQQQQQQQQQQQDGNFSMEQMAHNNYYNYNNYDYHRNKNGSHSDLVNLQRSNVPYMQEDGALYPHQYSSPSYSLHPTGNQFSNATNNLPQFGNAMSISMQLPNGNSNKTASSMNTNPNTNMIMNSNMNMNMNVNPVPYGMGNGANMYDVSRMMTPPLNIAPNSNNSKSSIMNKHPNRNNVPPIHPSLLH</sequence>
<proteinExistence type="evidence at protein level"/>